<reference key="1">
    <citation type="journal article" date="2006" name="J. Bacteriol.">
        <title>Comparative genomic analysis of three strains of Ehrlichia ruminantium reveals an active process of genome size plasticity.</title>
        <authorList>
            <person name="Frutos R."/>
            <person name="Viari A."/>
            <person name="Ferraz C."/>
            <person name="Morgat A."/>
            <person name="Eychenie S."/>
            <person name="Kandassamy Y."/>
            <person name="Chantal I."/>
            <person name="Bensaid A."/>
            <person name="Coissac E."/>
            <person name="Vachiery N."/>
            <person name="Demaille J."/>
            <person name="Martinez D."/>
        </authorList>
    </citation>
    <scope>NUCLEOTIDE SEQUENCE [LARGE SCALE GENOMIC DNA]</scope>
    <source>
        <strain>Gardel</strain>
    </source>
</reference>
<evidence type="ECO:0000255" key="1">
    <source>
        <dbReference type="HAMAP-Rule" id="MF_00096"/>
    </source>
</evidence>
<keyword id="KW-0067">ATP-binding</keyword>
<keyword id="KW-0227">DNA damage</keyword>
<keyword id="KW-0234">DNA repair</keyword>
<keyword id="KW-0238">DNA-binding</keyword>
<keyword id="KW-0547">Nucleotide-binding</keyword>
<comment type="function">
    <text evidence="1">This protein is involved in the repair of mismatches in DNA. It is possible that it carries out the mismatch recognition step. This protein has a weak ATPase activity.</text>
</comment>
<comment type="similarity">
    <text evidence="1">Belongs to the DNA mismatch repair MutS family.</text>
</comment>
<organism>
    <name type="scientific">Ehrlichia ruminantium (strain Gardel)</name>
    <dbReference type="NCBI Taxonomy" id="302409"/>
    <lineage>
        <taxon>Bacteria</taxon>
        <taxon>Pseudomonadati</taxon>
        <taxon>Pseudomonadota</taxon>
        <taxon>Alphaproteobacteria</taxon>
        <taxon>Rickettsiales</taxon>
        <taxon>Anaplasmataceae</taxon>
        <taxon>Ehrlichia</taxon>
    </lineage>
</organism>
<name>MUTS_EHRRG</name>
<protein>
    <recommendedName>
        <fullName evidence="1">DNA mismatch repair protein MutS</fullName>
    </recommendedName>
</protein>
<sequence>MTNSNSITPVMQQYVTLKQQYKEYLLFYRLGDFYELFFDDAIKTSKILNIVLTKKGNVPMCGVPFHSSETYLNKLVKLGYKIAICEQLETSEEARKRGYKSLVKRDVVRIVTPGTIVEDSLLEAKESNYLACIVRIKDSCAIAWLELSTGLFCYHMTHISKLDSDLLRIGPKELLVADDLLEIEAVYSIIKKYRFSITQYSSSFFDENRAYNTLCNVYGVSTLKGLGDLKGVEISVCGSLLEYVIATQKGSLPKLGFPKAYVQSDFMFIDAAALRNLELFSTQSGELEGSLIASIDFTVTASGGRLLKRCLSAPLASADAINRRLSAVEFFVNNQNLYKSVRQVLRGIADIERILTRVKIARCSPKDLYSLKLTLEKTYELVELLCKFNIDIISEFCSRLGRYEDLICILNNSLLQNSVSSVKDGGFINPECDAQLSEYIYIQECSNQLIQELRDRYRNITNIQSLKILYNNILGYYVEVSSNHLIDDKNFIHRQSLANNVRYTTTELKELESKIISAKDASISLEIKIFGQLCSDVIKYADKITITAHAIAEIDMLTSFAELAVQYSYSKPIIDDSYEFNIKKGKHPVVERNGKFITNDINLSSEQRVHLITGPNMAGKSTFLRQNALIGILAHIGSFVPAEYAHIGVIDKVFSRVGASDNIVCGYSTFMVEMIETAAVINQATERSFVILDEIGRGTGTYDGLSIAWSVIEQIHNVNKSRAIFATHYHELSKLDKYLKHIKCFCMKVEEWDGKVVFLHEIIPGASDKSYGIHVAKLAGFPQSVVNRAEYLMDKLKTNEDLLT</sequence>
<accession>Q5FHE8</accession>
<proteinExistence type="inferred from homology"/>
<dbReference type="EMBL" id="CR925677">
    <property type="protein sequence ID" value="CAI27722.1"/>
    <property type="molecule type" value="Genomic_DNA"/>
</dbReference>
<dbReference type="SMR" id="Q5FHE8"/>
<dbReference type="KEGG" id="erg:ERGA_CDS_02700"/>
<dbReference type="HOGENOM" id="CLU_002472_1_3_5"/>
<dbReference type="OrthoDB" id="9802448at2"/>
<dbReference type="Proteomes" id="UP000000533">
    <property type="component" value="Chromosome"/>
</dbReference>
<dbReference type="GO" id="GO:0005524">
    <property type="term" value="F:ATP binding"/>
    <property type="evidence" value="ECO:0007669"/>
    <property type="project" value="UniProtKB-UniRule"/>
</dbReference>
<dbReference type="GO" id="GO:0140664">
    <property type="term" value="F:ATP-dependent DNA damage sensor activity"/>
    <property type="evidence" value="ECO:0007669"/>
    <property type="project" value="InterPro"/>
</dbReference>
<dbReference type="GO" id="GO:0003684">
    <property type="term" value="F:damaged DNA binding"/>
    <property type="evidence" value="ECO:0007669"/>
    <property type="project" value="UniProtKB-UniRule"/>
</dbReference>
<dbReference type="GO" id="GO:0030983">
    <property type="term" value="F:mismatched DNA binding"/>
    <property type="evidence" value="ECO:0007669"/>
    <property type="project" value="InterPro"/>
</dbReference>
<dbReference type="GO" id="GO:0006298">
    <property type="term" value="P:mismatch repair"/>
    <property type="evidence" value="ECO:0007669"/>
    <property type="project" value="UniProtKB-UniRule"/>
</dbReference>
<dbReference type="CDD" id="cd03284">
    <property type="entry name" value="ABC_MutS1"/>
    <property type="match status" value="1"/>
</dbReference>
<dbReference type="FunFam" id="3.40.1170.10:FF:000001">
    <property type="entry name" value="DNA mismatch repair protein MutS"/>
    <property type="match status" value="1"/>
</dbReference>
<dbReference type="FunFam" id="3.40.50.300:FF:000870">
    <property type="entry name" value="MutS protein homolog 4"/>
    <property type="match status" value="1"/>
</dbReference>
<dbReference type="Gene3D" id="1.10.1420.10">
    <property type="match status" value="2"/>
</dbReference>
<dbReference type="Gene3D" id="3.40.1170.10">
    <property type="entry name" value="DNA repair protein MutS, domain I"/>
    <property type="match status" value="1"/>
</dbReference>
<dbReference type="Gene3D" id="3.30.420.110">
    <property type="entry name" value="MutS, connector domain"/>
    <property type="match status" value="1"/>
</dbReference>
<dbReference type="Gene3D" id="3.40.50.300">
    <property type="entry name" value="P-loop containing nucleotide triphosphate hydrolases"/>
    <property type="match status" value="1"/>
</dbReference>
<dbReference type="HAMAP" id="MF_00096">
    <property type="entry name" value="MutS"/>
    <property type="match status" value="1"/>
</dbReference>
<dbReference type="InterPro" id="IPR005748">
    <property type="entry name" value="DNA_mismatch_repair_MutS"/>
</dbReference>
<dbReference type="InterPro" id="IPR007695">
    <property type="entry name" value="DNA_mismatch_repair_MutS-lik_N"/>
</dbReference>
<dbReference type="InterPro" id="IPR017261">
    <property type="entry name" value="DNA_mismatch_repair_MutS/MSH"/>
</dbReference>
<dbReference type="InterPro" id="IPR000432">
    <property type="entry name" value="DNA_mismatch_repair_MutS_C"/>
</dbReference>
<dbReference type="InterPro" id="IPR007861">
    <property type="entry name" value="DNA_mismatch_repair_MutS_clamp"/>
</dbReference>
<dbReference type="InterPro" id="IPR007696">
    <property type="entry name" value="DNA_mismatch_repair_MutS_core"/>
</dbReference>
<dbReference type="InterPro" id="IPR016151">
    <property type="entry name" value="DNA_mismatch_repair_MutS_N"/>
</dbReference>
<dbReference type="InterPro" id="IPR036187">
    <property type="entry name" value="DNA_mismatch_repair_MutS_sf"/>
</dbReference>
<dbReference type="InterPro" id="IPR007860">
    <property type="entry name" value="DNA_mmatch_repair_MutS_con_dom"/>
</dbReference>
<dbReference type="InterPro" id="IPR045076">
    <property type="entry name" value="MutS"/>
</dbReference>
<dbReference type="InterPro" id="IPR036678">
    <property type="entry name" value="MutS_con_dom_sf"/>
</dbReference>
<dbReference type="InterPro" id="IPR027417">
    <property type="entry name" value="P-loop_NTPase"/>
</dbReference>
<dbReference type="NCBIfam" id="TIGR01070">
    <property type="entry name" value="mutS1"/>
    <property type="match status" value="1"/>
</dbReference>
<dbReference type="NCBIfam" id="NF003810">
    <property type="entry name" value="PRK05399.1"/>
    <property type="match status" value="1"/>
</dbReference>
<dbReference type="PANTHER" id="PTHR11361:SF34">
    <property type="entry name" value="DNA MISMATCH REPAIR PROTEIN MSH1, MITOCHONDRIAL"/>
    <property type="match status" value="1"/>
</dbReference>
<dbReference type="PANTHER" id="PTHR11361">
    <property type="entry name" value="DNA MISMATCH REPAIR PROTEIN MUTS FAMILY MEMBER"/>
    <property type="match status" value="1"/>
</dbReference>
<dbReference type="Pfam" id="PF01624">
    <property type="entry name" value="MutS_I"/>
    <property type="match status" value="1"/>
</dbReference>
<dbReference type="Pfam" id="PF05188">
    <property type="entry name" value="MutS_II"/>
    <property type="match status" value="1"/>
</dbReference>
<dbReference type="Pfam" id="PF05192">
    <property type="entry name" value="MutS_III"/>
    <property type="match status" value="1"/>
</dbReference>
<dbReference type="Pfam" id="PF05190">
    <property type="entry name" value="MutS_IV"/>
    <property type="match status" value="1"/>
</dbReference>
<dbReference type="Pfam" id="PF00488">
    <property type="entry name" value="MutS_V"/>
    <property type="match status" value="1"/>
</dbReference>
<dbReference type="PIRSF" id="PIRSF037677">
    <property type="entry name" value="DNA_mis_repair_Msh6"/>
    <property type="match status" value="1"/>
</dbReference>
<dbReference type="SMART" id="SM00534">
    <property type="entry name" value="MUTSac"/>
    <property type="match status" value="1"/>
</dbReference>
<dbReference type="SMART" id="SM00533">
    <property type="entry name" value="MUTSd"/>
    <property type="match status" value="1"/>
</dbReference>
<dbReference type="SUPFAM" id="SSF55271">
    <property type="entry name" value="DNA repair protein MutS, domain I"/>
    <property type="match status" value="1"/>
</dbReference>
<dbReference type="SUPFAM" id="SSF53150">
    <property type="entry name" value="DNA repair protein MutS, domain II"/>
    <property type="match status" value="1"/>
</dbReference>
<dbReference type="SUPFAM" id="SSF48334">
    <property type="entry name" value="DNA repair protein MutS, domain III"/>
    <property type="match status" value="1"/>
</dbReference>
<dbReference type="SUPFAM" id="SSF52540">
    <property type="entry name" value="P-loop containing nucleoside triphosphate hydrolases"/>
    <property type="match status" value="1"/>
</dbReference>
<dbReference type="PROSITE" id="PS00486">
    <property type="entry name" value="DNA_MISMATCH_REPAIR_2"/>
    <property type="match status" value="1"/>
</dbReference>
<feature type="chain" id="PRO_0000224370" description="DNA mismatch repair protein MutS">
    <location>
        <begin position="1"/>
        <end position="804"/>
    </location>
</feature>
<feature type="binding site" evidence="1">
    <location>
        <begin position="614"/>
        <end position="621"/>
    </location>
    <ligand>
        <name>ATP</name>
        <dbReference type="ChEBI" id="CHEBI:30616"/>
    </ligand>
</feature>
<gene>
    <name evidence="1" type="primary">mutS</name>
    <name type="ordered locus">ERGA_CDS_02700</name>
</gene>